<evidence type="ECO:0000255" key="1">
    <source>
        <dbReference type="HAMAP-Rule" id="MF_01077"/>
    </source>
</evidence>
<proteinExistence type="inferred from homology"/>
<gene>
    <name evidence="1" type="primary">rimP</name>
    <name type="ordered locus">Psyc_0067</name>
</gene>
<comment type="function">
    <text evidence="1">Required for maturation of 30S ribosomal subunits.</text>
</comment>
<comment type="subcellular location">
    <subcellularLocation>
        <location evidence="1">Cytoplasm</location>
    </subcellularLocation>
</comment>
<comment type="similarity">
    <text evidence="1">Belongs to the RimP family.</text>
</comment>
<dbReference type="EMBL" id="CP000082">
    <property type="protein sequence ID" value="AAZ17941.1"/>
    <property type="molecule type" value="Genomic_DNA"/>
</dbReference>
<dbReference type="RefSeq" id="WP_011279380.1">
    <property type="nucleotide sequence ID" value="NC_007204.1"/>
</dbReference>
<dbReference type="SMR" id="Q4FVL7"/>
<dbReference type="STRING" id="259536.Psyc_0067"/>
<dbReference type="KEGG" id="par:Psyc_0067"/>
<dbReference type="eggNOG" id="COG0779">
    <property type="taxonomic scope" value="Bacteria"/>
</dbReference>
<dbReference type="HOGENOM" id="CLU_070525_1_1_6"/>
<dbReference type="OrthoDB" id="9805006at2"/>
<dbReference type="Proteomes" id="UP000000546">
    <property type="component" value="Chromosome"/>
</dbReference>
<dbReference type="GO" id="GO:0005829">
    <property type="term" value="C:cytosol"/>
    <property type="evidence" value="ECO:0007669"/>
    <property type="project" value="TreeGrafter"/>
</dbReference>
<dbReference type="GO" id="GO:0000028">
    <property type="term" value="P:ribosomal small subunit assembly"/>
    <property type="evidence" value="ECO:0007669"/>
    <property type="project" value="TreeGrafter"/>
</dbReference>
<dbReference type="GO" id="GO:0006412">
    <property type="term" value="P:translation"/>
    <property type="evidence" value="ECO:0007669"/>
    <property type="project" value="TreeGrafter"/>
</dbReference>
<dbReference type="CDD" id="cd01734">
    <property type="entry name" value="YlxS_C"/>
    <property type="match status" value="1"/>
</dbReference>
<dbReference type="FunFam" id="3.30.300.70:FF:000001">
    <property type="entry name" value="Ribosome maturation factor RimP"/>
    <property type="match status" value="1"/>
</dbReference>
<dbReference type="Gene3D" id="2.30.30.180">
    <property type="entry name" value="Ribosome maturation factor RimP, C-terminal domain"/>
    <property type="match status" value="1"/>
</dbReference>
<dbReference type="Gene3D" id="3.30.300.70">
    <property type="entry name" value="RimP-like superfamily, N-terminal"/>
    <property type="match status" value="1"/>
</dbReference>
<dbReference type="HAMAP" id="MF_01077">
    <property type="entry name" value="RimP"/>
    <property type="match status" value="1"/>
</dbReference>
<dbReference type="InterPro" id="IPR003728">
    <property type="entry name" value="Ribosome_maturation_RimP"/>
</dbReference>
<dbReference type="InterPro" id="IPR028998">
    <property type="entry name" value="RimP_C"/>
</dbReference>
<dbReference type="InterPro" id="IPR036847">
    <property type="entry name" value="RimP_C_sf"/>
</dbReference>
<dbReference type="InterPro" id="IPR028989">
    <property type="entry name" value="RimP_N"/>
</dbReference>
<dbReference type="InterPro" id="IPR035956">
    <property type="entry name" value="RimP_N_sf"/>
</dbReference>
<dbReference type="NCBIfam" id="NF011224">
    <property type="entry name" value="PRK14631.1"/>
    <property type="match status" value="1"/>
</dbReference>
<dbReference type="PANTHER" id="PTHR33867">
    <property type="entry name" value="RIBOSOME MATURATION FACTOR RIMP"/>
    <property type="match status" value="1"/>
</dbReference>
<dbReference type="PANTHER" id="PTHR33867:SF1">
    <property type="entry name" value="RIBOSOME MATURATION FACTOR RIMP"/>
    <property type="match status" value="1"/>
</dbReference>
<dbReference type="Pfam" id="PF17384">
    <property type="entry name" value="DUF150_C"/>
    <property type="match status" value="1"/>
</dbReference>
<dbReference type="Pfam" id="PF02576">
    <property type="entry name" value="RimP_N"/>
    <property type="match status" value="1"/>
</dbReference>
<dbReference type="SUPFAM" id="SSF74942">
    <property type="entry name" value="YhbC-like, C-terminal domain"/>
    <property type="match status" value="1"/>
</dbReference>
<dbReference type="SUPFAM" id="SSF75420">
    <property type="entry name" value="YhbC-like, N-terminal domain"/>
    <property type="match status" value="1"/>
</dbReference>
<accession>Q4FVL7</accession>
<reference key="1">
    <citation type="journal article" date="2010" name="Appl. Environ. Microbiol.">
        <title>The genome sequence of Psychrobacter arcticus 273-4, a psychroactive Siberian permafrost bacterium, reveals mechanisms for adaptation to low-temperature growth.</title>
        <authorList>
            <person name="Ayala-del-Rio H.L."/>
            <person name="Chain P.S."/>
            <person name="Grzymski J.J."/>
            <person name="Ponder M.A."/>
            <person name="Ivanova N."/>
            <person name="Bergholz P.W."/>
            <person name="Di Bartolo G."/>
            <person name="Hauser L."/>
            <person name="Land M."/>
            <person name="Bakermans C."/>
            <person name="Rodrigues D."/>
            <person name="Klappenbach J."/>
            <person name="Zarka D."/>
            <person name="Larimer F."/>
            <person name="Richardson P."/>
            <person name="Murray A."/>
            <person name="Thomashow M."/>
            <person name="Tiedje J.M."/>
        </authorList>
    </citation>
    <scope>NUCLEOTIDE SEQUENCE [LARGE SCALE GENOMIC DNA]</scope>
    <source>
        <strain>DSM 17307 / VKM B-2377 / 273-4</strain>
    </source>
</reference>
<feature type="chain" id="PRO_0000229268" description="Ribosome maturation factor RimP">
    <location>
        <begin position="1"/>
        <end position="166"/>
    </location>
</feature>
<keyword id="KW-0963">Cytoplasm</keyword>
<keyword id="KW-1185">Reference proteome</keyword>
<keyword id="KW-0690">Ribosome biogenesis</keyword>
<name>RIMP_PSYA2</name>
<protein>
    <recommendedName>
        <fullName evidence="1">Ribosome maturation factor RimP</fullName>
    </recommendedName>
</protein>
<sequence length="166" mass="18060">MKLSTKVTELTNIIAPAVAACDVALWGIEFAPQGNRSLLRIYIEALPEEQAQNKQVTIENCAAVNHQVSGILEVHDPIAGEFILEVSSPGFDRAFFSDEQMHAYVGQTVSLRLIQAIGEGDKKRRKATGTLNSIDGTSLKLTATDGEQFEIALSNIDKANLIYEDA</sequence>
<organism>
    <name type="scientific">Psychrobacter arcticus (strain DSM 17307 / VKM B-2377 / 273-4)</name>
    <dbReference type="NCBI Taxonomy" id="259536"/>
    <lineage>
        <taxon>Bacteria</taxon>
        <taxon>Pseudomonadati</taxon>
        <taxon>Pseudomonadota</taxon>
        <taxon>Gammaproteobacteria</taxon>
        <taxon>Moraxellales</taxon>
        <taxon>Moraxellaceae</taxon>
        <taxon>Psychrobacter</taxon>
    </lineage>
</organism>